<sequence length="397" mass="43370">MAKEKFERNKPHVNVGTIGHVDHGKTTLTAALTKVCSDTWGGSARAFDQIDNAPEEKARGITINTSHVEYDSAVRHYAHVDCPGHADYVKNMITGAAQMDGAILVCSAADGPMPQTREHILLSRQVGVPYIVVFLNKADMVDDAELLELVEMEVRDLLNTYDFPGDDTPIIIGSALMALEGKDDNGIGVSAVQKLVETLDSYIPEPVRAIDQPFLMPIEDVFSISGRGTVVTGRVERGIIKVQEEVEIVGIKATTKTTCTGVEMFRKLLDEGRAGENVGILLRGTKREDVERGQVLAKPGTIKPHTKFECEVYVLSKEEGGRHTPFFKGYRPQFYFRTTDVTGNCELPEGVEMVMPGDNIKMVVTLIAPIAMEDGLRFAIREGGRTVGAGVVAKIIE</sequence>
<gene>
    <name evidence="2" type="primary">tuf1</name>
    <name type="ordered locus">PSPA7_0822</name>
</gene>
<gene>
    <name evidence="2" type="primary">tuf2</name>
    <name type="ordered locus">PSPA7_0835</name>
</gene>
<accession>A6UZH4</accession>
<accession>A6UZI6</accession>
<keyword id="KW-0963">Cytoplasm</keyword>
<keyword id="KW-0251">Elongation factor</keyword>
<keyword id="KW-0342">GTP-binding</keyword>
<keyword id="KW-0378">Hydrolase</keyword>
<keyword id="KW-0460">Magnesium</keyword>
<keyword id="KW-0479">Metal-binding</keyword>
<keyword id="KW-0547">Nucleotide-binding</keyword>
<keyword id="KW-0648">Protein biosynthesis</keyword>
<feature type="chain" id="PRO_0000337470" description="Elongation factor Tu">
    <location>
        <begin position="1"/>
        <end position="397"/>
    </location>
</feature>
<feature type="domain" description="tr-type G">
    <location>
        <begin position="10"/>
        <end position="207"/>
    </location>
</feature>
<feature type="region of interest" description="G1" evidence="1">
    <location>
        <begin position="19"/>
        <end position="26"/>
    </location>
</feature>
<feature type="region of interest" description="G2" evidence="1">
    <location>
        <begin position="60"/>
        <end position="64"/>
    </location>
</feature>
<feature type="region of interest" description="G3" evidence="1">
    <location>
        <begin position="81"/>
        <end position="84"/>
    </location>
</feature>
<feature type="region of interest" description="G4" evidence="1">
    <location>
        <begin position="136"/>
        <end position="139"/>
    </location>
</feature>
<feature type="region of interest" description="G5" evidence="1">
    <location>
        <begin position="174"/>
        <end position="176"/>
    </location>
</feature>
<feature type="binding site" evidence="2">
    <location>
        <begin position="19"/>
        <end position="26"/>
    </location>
    <ligand>
        <name>GTP</name>
        <dbReference type="ChEBI" id="CHEBI:37565"/>
    </ligand>
</feature>
<feature type="binding site" evidence="2">
    <location>
        <position position="26"/>
    </location>
    <ligand>
        <name>Mg(2+)</name>
        <dbReference type="ChEBI" id="CHEBI:18420"/>
    </ligand>
</feature>
<feature type="binding site" evidence="2">
    <location>
        <begin position="81"/>
        <end position="85"/>
    </location>
    <ligand>
        <name>GTP</name>
        <dbReference type="ChEBI" id="CHEBI:37565"/>
    </ligand>
</feature>
<feature type="binding site" evidence="2">
    <location>
        <begin position="136"/>
        <end position="139"/>
    </location>
    <ligand>
        <name>GTP</name>
        <dbReference type="ChEBI" id="CHEBI:37565"/>
    </ligand>
</feature>
<protein>
    <recommendedName>
        <fullName evidence="2">Elongation factor Tu</fullName>
        <shortName evidence="2">EF-Tu</shortName>
        <ecNumber evidence="2">3.6.5.3</ecNumber>
    </recommendedName>
</protein>
<name>EFTU_PSEP7</name>
<comment type="function">
    <text evidence="2">GTP hydrolase that promotes the GTP-dependent binding of aminoacyl-tRNA to the A-site of ribosomes during protein biosynthesis.</text>
</comment>
<comment type="catalytic activity">
    <reaction evidence="2">
        <text>GTP + H2O = GDP + phosphate + H(+)</text>
        <dbReference type="Rhea" id="RHEA:19669"/>
        <dbReference type="ChEBI" id="CHEBI:15377"/>
        <dbReference type="ChEBI" id="CHEBI:15378"/>
        <dbReference type="ChEBI" id="CHEBI:37565"/>
        <dbReference type="ChEBI" id="CHEBI:43474"/>
        <dbReference type="ChEBI" id="CHEBI:58189"/>
        <dbReference type="EC" id="3.6.5.3"/>
    </reaction>
    <physiologicalReaction direction="left-to-right" evidence="2">
        <dbReference type="Rhea" id="RHEA:19670"/>
    </physiologicalReaction>
</comment>
<comment type="subunit">
    <text evidence="2">Monomer.</text>
</comment>
<comment type="subcellular location">
    <subcellularLocation>
        <location evidence="2">Cytoplasm</location>
    </subcellularLocation>
</comment>
<comment type="similarity">
    <text evidence="2">Belongs to the TRAFAC class translation factor GTPase superfamily. Classic translation factor GTPase family. EF-Tu/EF-1A subfamily.</text>
</comment>
<comment type="sequence caution" evidence="3">
    <conflict type="erroneous initiation">
        <sequence resource="EMBL-CDS" id="ABR84560"/>
    </conflict>
</comment>
<reference key="1">
    <citation type="submission" date="2007-06" db="EMBL/GenBank/DDBJ databases">
        <authorList>
            <person name="Dodson R.J."/>
            <person name="Harkins D."/>
            <person name="Paulsen I.T."/>
        </authorList>
    </citation>
    <scope>NUCLEOTIDE SEQUENCE [LARGE SCALE GENOMIC DNA]</scope>
    <source>
        <strain>DSM 24068 / PA7</strain>
    </source>
</reference>
<dbReference type="EC" id="3.6.5.3" evidence="2"/>
<dbReference type="EMBL" id="CP000744">
    <property type="protein sequence ID" value="ABR84560.1"/>
    <property type="status" value="ALT_INIT"/>
    <property type="molecule type" value="Genomic_DNA"/>
</dbReference>
<dbReference type="EMBL" id="CP000744">
    <property type="protein sequence ID" value="ABR86328.1"/>
    <property type="molecule type" value="Genomic_DNA"/>
</dbReference>
<dbReference type="SMR" id="A6UZH4"/>
<dbReference type="KEGG" id="pap:PSPA7_0822"/>
<dbReference type="KEGG" id="pap:PSPA7_0835"/>
<dbReference type="HOGENOM" id="CLU_007265_0_0_6"/>
<dbReference type="Proteomes" id="UP000001582">
    <property type="component" value="Chromosome"/>
</dbReference>
<dbReference type="GO" id="GO:0005829">
    <property type="term" value="C:cytosol"/>
    <property type="evidence" value="ECO:0007669"/>
    <property type="project" value="TreeGrafter"/>
</dbReference>
<dbReference type="GO" id="GO:0005525">
    <property type="term" value="F:GTP binding"/>
    <property type="evidence" value="ECO:0007669"/>
    <property type="project" value="UniProtKB-UniRule"/>
</dbReference>
<dbReference type="GO" id="GO:0003924">
    <property type="term" value="F:GTPase activity"/>
    <property type="evidence" value="ECO:0007669"/>
    <property type="project" value="InterPro"/>
</dbReference>
<dbReference type="GO" id="GO:0097216">
    <property type="term" value="F:guanosine tetraphosphate binding"/>
    <property type="evidence" value="ECO:0007669"/>
    <property type="project" value="UniProtKB-ARBA"/>
</dbReference>
<dbReference type="GO" id="GO:0003746">
    <property type="term" value="F:translation elongation factor activity"/>
    <property type="evidence" value="ECO:0007669"/>
    <property type="project" value="UniProtKB-UniRule"/>
</dbReference>
<dbReference type="CDD" id="cd01884">
    <property type="entry name" value="EF_Tu"/>
    <property type="match status" value="1"/>
</dbReference>
<dbReference type="CDD" id="cd03697">
    <property type="entry name" value="EFTU_II"/>
    <property type="match status" value="1"/>
</dbReference>
<dbReference type="CDD" id="cd03707">
    <property type="entry name" value="EFTU_III"/>
    <property type="match status" value="1"/>
</dbReference>
<dbReference type="FunFam" id="2.40.30.10:FF:000001">
    <property type="entry name" value="Elongation factor Tu"/>
    <property type="match status" value="1"/>
</dbReference>
<dbReference type="FunFam" id="3.40.50.300:FF:000003">
    <property type="entry name" value="Elongation factor Tu"/>
    <property type="match status" value="1"/>
</dbReference>
<dbReference type="Gene3D" id="3.40.50.300">
    <property type="entry name" value="P-loop containing nucleotide triphosphate hydrolases"/>
    <property type="match status" value="1"/>
</dbReference>
<dbReference type="Gene3D" id="2.40.30.10">
    <property type="entry name" value="Translation factors"/>
    <property type="match status" value="2"/>
</dbReference>
<dbReference type="HAMAP" id="MF_00118_B">
    <property type="entry name" value="EF_Tu_B"/>
    <property type="match status" value="1"/>
</dbReference>
<dbReference type="InterPro" id="IPR041709">
    <property type="entry name" value="EF-Tu_GTP-bd"/>
</dbReference>
<dbReference type="InterPro" id="IPR050055">
    <property type="entry name" value="EF-Tu_GTPase"/>
</dbReference>
<dbReference type="InterPro" id="IPR004161">
    <property type="entry name" value="EFTu-like_2"/>
</dbReference>
<dbReference type="InterPro" id="IPR033720">
    <property type="entry name" value="EFTU_2"/>
</dbReference>
<dbReference type="InterPro" id="IPR031157">
    <property type="entry name" value="G_TR_CS"/>
</dbReference>
<dbReference type="InterPro" id="IPR027417">
    <property type="entry name" value="P-loop_NTPase"/>
</dbReference>
<dbReference type="InterPro" id="IPR005225">
    <property type="entry name" value="Small_GTP-bd"/>
</dbReference>
<dbReference type="InterPro" id="IPR000795">
    <property type="entry name" value="T_Tr_GTP-bd_dom"/>
</dbReference>
<dbReference type="InterPro" id="IPR009000">
    <property type="entry name" value="Transl_B-barrel_sf"/>
</dbReference>
<dbReference type="InterPro" id="IPR009001">
    <property type="entry name" value="Transl_elong_EF1A/Init_IF2_C"/>
</dbReference>
<dbReference type="InterPro" id="IPR004541">
    <property type="entry name" value="Transl_elong_EFTu/EF1A_bac/org"/>
</dbReference>
<dbReference type="InterPro" id="IPR004160">
    <property type="entry name" value="Transl_elong_EFTu/EF1A_C"/>
</dbReference>
<dbReference type="NCBIfam" id="TIGR00485">
    <property type="entry name" value="EF-Tu"/>
    <property type="match status" value="1"/>
</dbReference>
<dbReference type="NCBIfam" id="NF000766">
    <property type="entry name" value="PRK00049.1"/>
    <property type="match status" value="1"/>
</dbReference>
<dbReference type="NCBIfam" id="NF009372">
    <property type="entry name" value="PRK12735.1"/>
    <property type="match status" value="1"/>
</dbReference>
<dbReference type="NCBIfam" id="NF009373">
    <property type="entry name" value="PRK12736.1"/>
    <property type="match status" value="1"/>
</dbReference>
<dbReference type="NCBIfam" id="TIGR00231">
    <property type="entry name" value="small_GTP"/>
    <property type="match status" value="1"/>
</dbReference>
<dbReference type="PANTHER" id="PTHR43721:SF22">
    <property type="entry name" value="ELONGATION FACTOR TU, MITOCHONDRIAL"/>
    <property type="match status" value="1"/>
</dbReference>
<dbReference type="PANTHER" id="PTHR43721">
    <property type="entry name" value="ELONGATION FACTOR TU-RELATED"/>
    <property type="match status" value="1"/>
</dbReference>
<dbReference type="Pfam" id="PF00009">
    <property type="entry name" value="GTP_EFTU"/>
    <property type="match status" value="1"/>
</dbReference>
<dbReference type="Pfam" id="PF03144">
    <property type="entry name" value="GTP_EFTU_D2"/>
    <property type="match status" value="1"/>
</dbReference>
<dbReference type="Pfam" id="PF03143">
    <property type="entry name" value="GTP_EFTU_D3"/>
    <property type="match status" value="1"/>
</dbReference>
<dbReference type="PRINTS" id="PR00315">
    <property type="entry name" value="ELONGATNFCT"/>
</dbReference>
<dbReference type="SUPFAM" id="SSF50465">
    <property type="entry name" value="EF-Tu/eEF-1alpha/eIF2-gamma C-terminal domain"/>
    <property type="match status" value="1"/>
</dbReference>
<dbReference type="SUPFAM" id="SSF52540">
    <property type="entry name" value="P-loop containing nucleoside triphosphate hydrolases"/>
    <property type="match status" value="1"/>
</dbReference>
<dbReference type="SUPFAM" id="SSF50447">
    <property type="entry name" value="Translation proteins"/>
    <property type="match status" value="1"/>
</dbReference>
<dbReference type="PROSITE" id="PS00301">
    <property type="entry name" value="G_TR_1"/>
    <property type="match status" value="1"/>
</dbReference>
<dbReference type="PROSITE" id="PS51722">
    <property type="entry name" value="G_TR_2"/>
    <property type="match status" value="1"/>
</dbReference>
<proteinExistence type="inferred from homology"/>
<organism>
    <name type="scientific">Pseudomonas paraeruginosa (strain DSM 24068 / PA7)</name>
    <name type="common">Pseudomonas aeruginosa (strain PA7)</name>
    <dbReference type="NCBI Taxonomy" id="381754"/>
    <lineage>
        <taxon>Bacteria</taxon>
        <taxon>Pseudomonadati</taxon>
        <taxon>Pseudomonadota</taxon>
        <taxon>Gammaproteobacteria</taxon>
        <taxon>Pseudomonadales</taxon>
        <taxon>Pseudomonadaceae</taxon>
        <taxon>Pseudomonas</taxon>
        <taxon>Pseudomonas paraeruginosa</taxon>
    </lineage>
</organism>
<evidence type="ECO:0000250" key="1"/>
<evidence type="ECO:0000255" key="2">
    <source>
        <dbReference type="HAMAP-Rule" id="MF_00118"/>
    </source>
</evidence>
<evidence type="ECO:0000305" key="3"/>